<evidence type="ECO:0000255" key="1">
    <source>
        <dbReference type="HAMAP-Rule" id="MF_03015"/>
    </source>
</evidence>
<evidence type="ECO:0000256" key="2">
    <source>
        <dbReference type="SAM" id="MobiDB-lite"/>
    </source>
</evidence>
<evidence type="ECO:0000305" key="3"/>
<gene>
    <name evidence="1" type="primary">RPS0</name>
    <name type="ORF">CHGG_08129</name>
</gene>
<accession>Q2GV75</accession>
<sequence length="293" mass="31735">MAPANLPSIFNATSTDIEQLLAAQCHVGSKNLGVNMQPYLWKTRADGVNVINIGKTWEKITLAARIIAAIDNPSDVCVISARPYGQRAVLKFAAHTGAQAIAGRFTPGSFTNYITRSFKEPRLIIVTDPRTDSQAIKEASYVNIPVIALCDTDSPTEYVDVAIPTNNKGRHSIGLVWWMLAREVLRLRGTIYNRETPWDVMPDLYFYRDPEAEAEEKVEEEKVPGVEEEGPVAIESGFPAGGADWEAAPAGFPAAATGEWSEAQPATWESGAAAATGPSTEWADSAPKDTAGW</sequence>
<name>RSSA_CHAGB</name>
<dbReference type="EMBL" id="CH408033">
    <property type="protein sequence ID" value="EAQ86876.1"/>
    <property type="molecule type" value="Genomic_DNA"/>
</dbReference>
<dbReference type="RefSeq" id="XP_001225785.1">
    <property type="nucleotide sequence ID" value="XM_001225784.1"/>
</dbReference>
<dbReference type="SMR" id="Q2GV75"/>
<dbReference type="FunCoup" id="Q2GV75">
    <property type="interactions" value="1111"/>
</dbReference>
<dbReference type="STRING" id="306901.Q2GV75"/>
<dbReference type="GeneID" id="4394490"/>
<dbReference type="VEuPathDB" id="FungiDB:CHGG_08129"/>
<dbReference type="eggNOG" id="KOG0830">
    <property type="taxonomic scope" value="Eukaryota"/>
</dbReference>
<dbReference type="HOGENOM" id="CLU_058171_0_1_1"/>
<dbReference type="InParanoid" id="Q2GV75"/>
<dbReference type="OMA" id="VKNFFEP"/>
<dbReference type="OrthoDB" id="414863at2759"/>
<dbReference type="Proteomes" id="UP000001056">
    <property type="component" value="Unassembled WGS sequence"/>
</dbReference>
<dbReference type="GO" id="GO:0022627">
    <property type="term" value="C:cytosolic small ribosomal subunit"/>
    <property type="evidence" value="ECO:0007669"/>
    <property type="project" value="UniProtKB-UniRule"/>
</dbReference>
<dbReference type="GO" id="GO:0003735">
    <property type="term" value="F:structural constituent of ribosome"/>
    <property type="evidence" value="ECO:0007669"/>
    <property type="project" value="UniProtKB-UniRule"/>
</dbReference>
<dbReference type="GO" id="GO:0000028">
    <property type="term" value="P:ribosomal small subunit assembly"/>
    <property type="evidence" value="ECO:0007669"/>
    <property type="project" value="UniProtKB-UniRule"/>
</dbReference>
<dbReference type="GO" id="GO:0006412">
    <property type="term" value="P:translation"/>
    <property type="evidence" value="ECO:0007669"/>
    <property type="project" value="UniProtKB-UniRule"/>
</dbReference>
<dbReference type="CDD" id="cd01425">
    <property type="entry name" value="RPS2"/>
    <property type="match status" value="1"/>
</dbReference>
<dbReference type="FunFam" id="3.40.50.10490:FF:000010">
    <property type="entry name" value="40S ribosomal protein S0"/>
    <property type="match status" value="1"/>
</dbReference>
<dbReference type="Gene3D" id="3.40.50.10490">
    <property type="entry name" value="Glucose-6-phosphate isomerase like protein, domain 1"/>
    <property type="match status" value="1"/>
</dbReference>
<dbReference type="HAMAP" id="MF_03015">
    <property type="entry name" value="Ribosomal_S2_euk"/>
    <property type="match status" value="1"/>
</dbReference>
<dbReference type="InterPro" id="IPR001865">
    <property type="entry name" value="Ribosomal_uS2"/>
</dbReference>
<dbReference type="InterPro" id="IPR018130">
    <property type="entry name" value="Ribosomal_uS2_CS"/>
</dbReference>
<dbReference type="InterPro" id="IPR027498">
    <property type="entry name" value="Ribosomal_uS2_euk"/>
</dbReference>
<dbReference type="InterPro" id="IPR005707">
    <property type="entry name" value="Ribosomal_uS2_euk/arc"/>
</dbReference>
<dbReference type="InterPro" id="IPR023591">
    <property type="entry name" value="Ribosomal_uS2_flav_dom_sf"/>
</dbReference>
<dbReference type="NCBIfam" id="TIGR01012">
    <property type="entry name" value="uS2_euk_arch"/>
    <property type="match status" value="1"/>
</dbReference>
<dbReference type="PANTHER" id="PTHR11489">
    <property type="entry name" value="40S RIBOSOMAL PROTEIN SA"/>
    <property type="match status" value="1"/>
</dbReference>
<dbReference type="Pfam" id="PF00318">
    <property type="entry name" value="Ribosomal_S2"/>
    <property type="match status" value="2"/>
</dbReference>
<dbReference type="PRINTS" id="PR00395">
    <property type="entry name" value="RIBOSOMALS2"/>
</dbReference>
<dbReference type="SUPFAM" id="SSF52313">
    <property type="entry name" value="Ribosomal protein S2"/>
    <property type="match status" value="1"/>
</dbReference>
<dbReference type="PROSITE" id="PS00963">
    <property type="entry name" value="RIBOSOMAL_S2_2"/>
    <property type="match status" value="1"/>
</dbReference>
<organism>
    <name type="scientific">Chaetomium globosum (strain ATCC 6205 / CBS 148.51 / DSM 1962 / NBRC 6347 / NRRL 1970)</name>
    <name type="common">Soil fungus</name>
    <dbReference type="NCBI Taxonomy" id="306901"/>
    <lineage>
        <taxon>Eukaryota</taxon>
        <taxon>Fungi</taxon>
        <taxon>Dikarya</taxon>
        <taxon>Ascomycota</taxon>
        <taxon>Pezizomycotina</taxon>
        <taxon>Sordariomycetes</taxon>
        <taxon>Sordariomycetidae</taxon>
        <taxon>Sordariales</taxon>
        <taxon>Chaetomiaceae</taxon>
        <taxon>Chaetomium</taxon>
    </lineage>
</organism>
<keyword id="KW-0963">Cytoplasm</keyword>
<keyword id="KW-1185">Reference proteome</keyword>
<keyword id="KW-0687">Ribonucleoprotein</keyword>
<keyword id="KW-0689">Ribosomal protein</keyword>
<feature type="chain" id="PRO_0000371627" description="Small ribosomal subunit protein uS2">
    <location>
        <begin position="1"/>
        <end position="293"/>
    </location>
</feature>
<feature type="region of interest" description="Disordered" evidence="2">
    <location>
        <begin position="239"/>
        <end position="293"/>
    </location>
</feature>
<feature type="compositionally biased region" description="Low complexity" evidence="2">
    <location>
        <begin position="247"/>
        <end position="256"/>
    </location>
</feature>
<protein>
    <recommendedName>
        <fullName evidence="1">Small ribosomal subunit protein uS2</fullName>
    </recommendedName>
    <alternativeName>
        <fullName evidence="3">40S ribosomal protein S0</fullName>
    </alternativeName>
</protein>
<comment type="function">
    <text evidence="1">Required for the assembly and/or stability of the 40S ribosomal subunit. Required for the processing of the 20S rRNA-precursor to mature 18S rRNA in a late step of the maturation of 40S ribosomal subunits.</text>
</comment>
<comment type="subunit">
    <text evidence="1">Component of the small ribosomal subunit. Mature ribosomes consist of a small (40S) and a large (60S) subunit. The 40S subunit contains about 33 different proteins and 1 molecule of RNA (18S). The 60S subunit contains about 49 different proteins and 3 molecules of RNA (25S, 5.8S and 5S). Interacts with RPS21.</text>
</comment>
<comment type="subcellular location">
    <subcellularLocation>
        <location evidence="1">Cytoplasm</location>
    </subcellularLocation>
</comment>
<comment type="similarity">
    <text evidence="1">Belongs to the universal ribosomal protein uS2 family.</text>
</comment>
<proteinExistence type="inferred from homology"/>
<reference key="1">
    <citation type="journal article" date="2015" name="Genome Announc.">
        <title>Draft genome sequence of the cellulolytic fungus Chaetomium globosum.</title>
        <authorList>
            <person name="Cuomo C.A."/>
            <person name="Untereiner W.A."/>
            <person name="Ma L.-J."/>
            <person name="Grabherr M."/>
            <person name="Birren B.W."/>
        </authorList>
    </citation>
    <scope>NUCLEOTIDE SEQUENCE [LARGE SCALE GENOMIC DNA]</scope>
    <source>
        <strain>ATCC 6205 / CBS 148.51 / DSM 1962 / NBRC 6347 / NRRL 1970</strain>
    </source>
</reference>